<sequence>MSFNFTKDFLYSGKVYGLFYKGISVGRLEFNGGSVKITSGYIAIFPNYAPTEAKSGNILLTNVAKGSIRYSYNGADCAGWFIHSVEVAEISKLARPLLDAICYRHVYVGKPGIVANYFVDGDTSKCVVRSIEPFTLVCDPRDVTAGQVLEKNLSTMTVVSVANKVKFNPKGNLTLYIFNTTLRGNDLFDSAHHSVWDCKGGEFYRQSQ</sequence>
<proteinExistence type="predicted"/>
<accession>P16281</accession>
<name>V23K_PEBV</name>
<keyword id="KW-1185">Reference proteome</keyword>
<organism>
    <name type="scientific">Pea early browning virus</name>
    <dbReference type="NCBI Taxonomy" id="12294"/>
    <lineage>
        <taxon>Viruses</taxon>
        <taxon>Riboviria</taxon>
        <taxon>Orthornavirae</taxon>
        <taxon>Kitrinoviricota</taxon>
        <taxon>Alsuviricetes</taxon>
        <taxon>Martellivirales</taxon>
        <taxon>Virgaviridae</taxon>
        <taxon>Tobravirus</taxon>
    </lineage>
</organism>
<protein>
    <recommendedName>
        <fullName>23 kDa protein</fullName>
    </recommendedName>
</protein>
<organismHost>
    <name type="scientific">Phaseolus vulgaris</name>
    <name type="common">Kidney bean</name>
    <name type="synonym">French bean</name>
    <dbReference type="NCBI Taxonomy" id="3885"/>
</organismHost>
<organismHost>
    <name type="scientific">Pisum sativum</name>
    <name type="common">Garden pea</name>
    <name type="synonym">Lathyrus oleraceus</name>
    <dbReference type="NCBI Taxonomy" id="3888"/>
</organismHost>
<dbReference type="EMBL" id="X78455">
    <property type="protein sequence ID" value="CAA55215.1"/>
    <property type="molecule type" value="Genomic_RNA"/>
</dbReference>
<dbReference type="EMBL" id="X51828">
    <property type="protein sequence ID" value="CAA36127.1"/>
    <property type="molecule type" value="Genomic_RNA"/>
</dbReference>
<dbReference type="PIR" id="S14700">
    <property type="entry name" value="S14700"/>
</dbReference>
<dbReference type="RefSeq" id="NP_040353.1">
    <property type="nucleotide sequence ID" value="NC_001368.1"/>
</dbReference>
<dbReference type="GeneID" id="962123"/>
<dbReference type="KEGG" id="vg:962123"/>
<dbReference type="Proteomes" id="UP000201257">
    <property type="component" value="Genome"/>
</dbReference>
<reference key="1">
    <citation type="journal article" date="1990" name="Nucleic Acids Res.">
        <title>The complete nucleotide sequence of PEBV RNA2 reveals the presence of a novel open reading frame and provides insights into the structure of tobraviral subgenomic promoters.</title>
        <authorList>
            <person name="Goulden M.G."/>
            <person name="Lomonossoff G.P."/>
            <person name="Davies J.W."/>
            <person name="Wood K.R."/>
        </authorList>
    </citation>
    <scope>NUCLEOTIDE SEQUENCE [GENOMIC RNA]</scope>
    <source>
        <strain>SP5</strain>
    </source>
</reference>
<feature type="chain" id="PRO_0000222519" description="23 kDa protein">
    <location>
        <begin position="1"/>
        <end position="208"/>
    </location>
</feature>